<feature type="signal peptide" evidence="2">
    <location>
        <begin position="1"/>
        <end position="24"/>
    </location>
</feature>
<feature type="chain" id="PRO_0000429466" description="Kunitz-type serine protease inhibitor Bi-KTI" evidence="7">
    <location>
        <begin position="25"/>
        <end position="82"/>
    </location>
</feature>
<feature type="domain" description="BPTI/Kunitz inhibitor" evidence="3">
    <location>
        <begin position="30"/>
        <end position="80"/>
    </location>
</feature>
<feature type="site" description="Reactive bond for trypsin" evidence="1">
    <location>
        <begin position="40"/>
        <end position="41"/>
    </location>
</feature>
<feature type="disulfide bond" evidence="3">
    <location>
        <begin position="30"/>
        <end position="80"/>
    </location>
</feature>
<feature type="disulfide bond" evidence="3">
    <location>
        <begin position="39"/>
        <end position="63"/>
    </location>
</feature>
<feature type="disulfide bond" evidence="3">
    <location>
        <begin position="55"/>
        <end position="76"/>
    </location>
</feature>
<accession>G3LH89</accession>
<reference key="1">
    <citation type="journal article" date="2012" name="PLoS ONE">
        <title>Antifibrinolytic role of a bee venom serine protease inhibitor that acts as a plasmin inhibitor.</title>
        <authorList>
            <person name="Choo Y.M."/>
            <person name="Lee K.S."/>
            <person name="Yoon H.J."/>
            <person name="Qiu Y."/>
            <person name="Wan H."/>
            <person name="Sohn M.R."/>
            <person name="Sohn H.D."/>
            <person name="Jin B.R."/>
        </authorList>
    </citation>
    <scope>NUCLEOTIDE SEQUENCE [MRNA]</scope>
    <scope>FUNCTION</scope>
</reference>
<organism>
    <name type="scientific">Bombus ignitus</name>
    <name type="common">Bumblebee</name>
    <dbReference type="NCBI Taxonomy" id="130704"/>
    <lineage>
        <taxon>Eukaryota</taxon>
        <taxon>Metazoa</taxon>
        <taxon>Ecdysozoa</taxon>
        <taxon>Arthropoda</taxon>
        <taxon>Hexapoda</taxon>
        <taxon>Insecta</taxon>
        <taxon>Pterygota</taxon>
        <taxon>Neoptera</taxon>
        <taxon>Endopterygota</taxon>
        <taxon>Hymenoptera</taxon>
        <taxon>Apocrita</taxon>
        <taxon>Aculeata</taxon>
        <taxon>Apoidea</taxon>
        <taxon>Anthophila</taxon>
        <taxon>Apidae</taxon>
        <taxon>Bombus</taxon>
        <taxon>Bombus</taxon>
    </lineage>
</organism>
<sequence>MNHKFIALLLVVLCCALAVHQVSAEVPSHCTLSLATGTCKGYFPRFGYNIEMGKCVEFIYGGCDGNANNFRNLEECQQSCSV</sequence>
<comment type="function">
    <text evidence="4">Serine protease inhibitor that inhibits plasmin (IC(50)=43.53 nM, Ki=3.6 nM), thereby acting as an antifibrinolytic agent. May act in a cooperative manner with the serine protease Bi-VSP (AC B5U2W0) to promote the spread of bee venom under anti-bleeding conditions.</text>
</comment>
<comment type="subcellular location">
    <subcellularLocation>
        <location evidence="7">Secreted</location>
    </subcellularLocation>
</comment>
<comment type="tissue specificity">
    <text evidence="7">Expressed by the venom gland.</text>
</comment>
<comment type="miscellaneous">
    <text evidence="7">Negative results: does not inhibit factor Xa, thrombin, and tissue plasminogen activator (t-PA).</text>
</comment>
<comment type="similarity">
    <text evidence="6">Belongs to the venom Kunitz-type family.</text>
</comment>
<proteinExistence type="inferred from homology"/>
<keyword id="KW-1015">Disulfide bond</keyword>
<keyword id="KW-1199">Hemostasis impairing toxin</keyword>
<keyword id="KW-0646">Protease inhibitor</keyword>
<keyword id="KW-0964">Secreted</keyword>
<keyword id="KW-0722">Serine protease inhibitor</keyword>
<keyword id="KW-0732">Signal</keyword>
<keyword id="KW-0800">Toxin</keyword>
<evidence type="ECO:0000250" key="1"/>
<evidence type="ECO:0000255" key="2"/>
<evidence type="ECO:0000255" key="3">
    <source>
        <dbReference type="PROSITE-ProRule" id="PRU00031"/>
    </source>
</evidence>
<evidence type="ECO:0000269" key="4">
    <source>
    </source>
</evidence>
<evidence type="ECO:0000303" key="5">
    <source>
    </source>
</evidence>
<evidence type="ECO:0000305" key="6"/>
<evidence type="ECO:0000305" key="7">
    <source>
    </source>
</evidence>
<protein>
    <recommendedName>
        <fullName evidence="5">Kunitz-type serine protease inhibitor Bi-KTI</fullName>
    </recommendedName>
</protein>
<dbReference type="EMBL" id="JN381496">
    <property type="protein sequence ID" value="AEM68408.1"/>
    <property type="molecule type" value="mRNA"/>
</dbReference>
<dbReference type="SMR" id="G3LH89"/>
<dbReference type="GO" id="GO:0005615">
    <property type="term" value="C:extracellular space"/>
    <property type="evidence" value="ECO:0000303"/>
    <property type="project" value="UniProtKB"/>
</dbReference>
<dbReference type="GO" id="GO:0004867">
    <property type="term" value="F:serine-type endopeptidase inhibitor activity"/>
    <property type="evidence" value="ECO:0000314"/>
    <property type="project" value="UniProtKB"/>
</dbReference>
<dbReference type="GO" id="GO:0090729">
    <property type="term" value="F:toxin activity"/>
    <property type="evidence" value="ECO:0007669"/>
    <property type="project" value="UniProtKB-KW"/>
</dbReference>
<dbReference type="GO" id="GO:0140099">
    <property type="term" value="P:venom-mediated suppression of fibrinolysis in another organism"/>
    <property type="evidence" value="ECO:0000314"/>
    <property type="project" value="UniProtKB"/>
</dbReference>
<dbReference type="FunFam" id="4.10.410.10:FF:000020">
    <property type="entry name" value="Collagen, type VI, alpha 3"/>
    <property type="match status" value="1"/>
</dbReference>
<dbReference type="Gene3D" id="4.10.410.10">
    <property type="entry name" value="Pancreatic trypsin inhibitor Kunitz domain"/>
    <property type="match status" value="1"/>
</dbReference>
<dbReference type="InterPro" id="IPR002223">
    <property type="entry name" value="Kunitz_BPTI"/>
</dbReference>
<dbReference type="InterPro" id="IPR036880">
    <property type="entry name" value="Kunitz_BPTI_sf"/>
</dbReference>
<dbReference type="InterPro" id="IPR020901">
    <property type="entry name" value="Prtase_inh_Kunz-CS"/>
</dbReference>
<dbReference type="InterPro" id="IPR050098">
    <property type="entry name" value="TFPI/VKTCI-like"/>
</dbReference>
<dbReference type="PANTHER" id="PTHR10083:SF374">
    <property type="entry name" value="BPTI_KUNITZ INHIBITOR DOMAIN-CONTAINING PROTEIN"/>
    <property type="match status" value="1"/>
</dbReference>
<dbReference type="PANTHER" id="PTHR10083">
    <property type="entry name" value="KUNITZ-TYPE PROTEASE INHIBITOR-RELATED"/>
    <property type="match status" value="1"/>
</dbReference>
<dbReference type="Pfam" id="PF00014">
    <property type="entry name" value="Kunitz_BPTI"/>
    <property type="match status" value="1"/>
</dbReference>
<dbReference type="PRINTS" id="PR00759">
    <property type="entry name" value="BASICPTASE"/>
</dbReference>
<dbReference type="SMART" id="SM00131">
    <property type="entry name" value="KU"/>
    <property type="match status" value="1"/>
</dbReference>
<dbReference type="SUPFAM" id="SSF57362">
    <property type="entry name" value="BPTI-like"/>
    <property type="match status" value="1"/>
</dbReference>
<dbReference type="PROSITE" id="PS00280">
    <property type="entry name" value="BPTI_KUNITZ_1"/>
    <property type="match status" value="1"/>
</dbReference>
<dbReference type="PROSITE" id="PS50279">
    <property type="entry name" value="BPTI_KUNITZ_2"/>
    <property type="match status" value="1"/>
</dbReference>
<name>VKT_BOMIG</name>